<protein>
    <recommendedName>
        <fullName>Radixin</fullName>
    </recommendedName>
    <alternativeName>
        <fullName>Moesin-B</fullName>
    </alternativeName>
</protein>
<evidence type="ECO:0000250" key="1"/>
<evidence type="ECO:0000250" key="2">
    <source>
        <dbReference type="UniProtKB" id="P26043"/>
    </source>
</evidence>
<evidence type="ECO:0000250" key="3">
    <source>
        <dbReference type="UniProtKB" id="P35241"/>
    </source>
</evidence>
<evidence type="ECO:0000255" key="4">
    <source>
        <dbReference type="PROSITE-ProRule" id="PRU00084"/>
    </source>
</evidence>
<evidence type="ECO:0000256" key="5">
    <source>
        <dbReference type="SAM" id="MobiDB-lite"/>
    </source>
</evidence>
<gene>
    <name type="primary">RDX</name>
</gene>
<feature type="chain" id="PRO_0000219423" description="Radixin">
    <location>
        <begin position="1"/>
        <end position="583"/>
    </location>
</feature>
<feature type="domain" description="FERM" evidence="4">
    <location>
        <begin position="5"/>
        <end position="295"/>
    </location>
</feature>
<feature type="region of interest" description="Disordered" evidence="5">
    <location>
        <begin position="310"/>
        <end position="336"/>
    </location>
</feature>
<feature type="region of interest" description="Disordered" evidence="5">
    <location>
        <begin position="374"/>
        <end position="407"/>
    </location>
</feature>
<feature type="region of interest" description="Disordered" evidence="5">
    <location>
        <begin position="458"/>
        <end position="526"/>
    </location>
</feature>
<feature type="compositionally biased region" description="Basic and acidic residues" evidence="5">
    <location>
        <begin position="374"/>
        <end position="400"/>
    </location>
</feature>
<feature type="compositionally biased region" description="Pro residues" evidence="5">
    <location>
        <begin position="469"/>
        <end position="480"/>
    </location>
</feature>
<feature type="compositionally biased region" description="Basic and acidic residues" evidence="5">
    <location>
        <begin position="483"/>
        <end position="492"/>
    </location>
</feature>
<feature type="compositionally biased region" description="Basic and acidic residues" evidence="5">
    <location>
        <begin position="506"/>
        <end position="525"/>
    </location>
</feature>
<feature type="binding site" evidence="1">
    <location>
        <begin position="60"/>
        <end position="63"/>
    </location>
    <ligand>
        <name>a 1,2-diacyl-sn-glycero-3-phospho-(1D-myo-inositol)</name>
        <dbReference type="ChEBI" id="CHEBI:57880"/>
    </ligand>
</feature>
<feature type="binding site" evidence="1">
    <location>
        <position position="278"/>
    </location>
    <ligand>
        <name>a 1,2-diacyl-sn-glycero-3-phospho-(1D-myo-inositol)</name>
        <dbReference type="ChEBI" id="CHEBI:57880"/>
    </ligand>
</feature>
<feature type="modified residue" description="N6-succinyllysine" evidence="2">
    <location>
        <position position="83"/>
    </location>
</feature>
<feature type="modified residue" description="Phosphothreonine; by ROCK2" evidence="2">
    <location>
        <position position="564"/>
    </location>
</feature>
<accession>P26044</accession>
<sequence length="583" mass="68550">MPKPINVRVTTMDAELEFAIQPNTTGKQLFDQVVKTVGLREVWFFGLQYVDSKGYSTWLKLNKKVTQQDVKKENPLQFKFRAKFFPEDVSEELIQEITQRLFFLQVKEAILNDEIYCPPETAVLLASYAVQAKYGDYNKEIHKPGYLANDRLLPQRVLEQHKLTKEQWEERIQNWHEEHRGMLREDSIMEYLKIAQDLEMYGVNYFEIKNKKGTELWLGVDALGLNIYEHDDKLTPKIGFPWSEIRNISFNDKKFVIKPIDKKAPDFVFYAPRLRINKRILALCMGNHELYMRRRKPDTIEVQQMKAQAREEKHQKQLERAQLENEKKKREIAEKEKERIEREKEELMERLRQIEEQTMKAQKELEEQTRKALELDQERKRAKEEAERLEKERRAAEEAKSAIAKQAADQMKNQEQLAAELAEFTAKIALLEEAKKKKEEEATEWQHKAFAAQEDLEKTKEELKTVMSAPPPPPPPPVVPPTENEHDEHDENNAEASAELSNDGVMNHRSEEERVTETQKNERVNKQLQALSSELAQARDETKKTQNDVLHAENVKAGRDKYKTLRQIRQGNTKQRIDEFEAM</sequence>
<comment type="function">
    <text>Probably plays a crucial role in the binding of the barbed end of actin filaments to the plasma membrane.</text>
</comment>
<comment type="activity regulation">
    <text evidence="1">A head-to-tail association, of the N-terminal and C-terminal halves results in a closed conformation (inactive form) which is incapable of actin or membrane-binding.</text>
</comment>
<comment type="subunit">
    <text evidence="2 3">Interacts with CPNE1 (via VWFA domain) and CPNE4 (via VWFA domain). Binds NHERF1. Interacts with NHERF1, NHERF2, LAYN, MME/NEP and ICAM2. Interacts (via FERM domain) with SPN/CD43 cytoplasmic tail (By similarity). Interacts with CD44 (By similarity). Interacts with CLIC5; may work together in a complex which also includes EZR and MYO6 to stabilize linkages between the plasma membrane and subjacent actin cytoskeleton at the base of stereocilia (By similarity).</text>
</comment>
<comment type="subcellular location">
    <subcellularLocation>
        <location>Cell membrane</location>
        <topology>Peripheral membrane protein</topology>
        <orientation>Cytoplasmic side</orientation>
    </subcellularLocation>
    <subcellularLocation>
        <location>Cytoplasm</location>
        <location>Cytoskeleton</location>
    </subcellularLocation>
    <subcellularLocation>
        <location>Cleavage furrow</location>
    </subcellularLocation>
    <subcellularLocation>
        <location evidence="2">Cell projection</location>
        <location evidence="2">Microvillus</location>
    </subcellularLocation>
    <subcellularLocation>
        <location evidence="2">Cell projection</location>
        <location evidence="2">Stereocilium</location>
    </subcellularLocation>
    <text evidence="2">Enriched at the stereocilium base with very low levels in the shaft of stereociliary bundles (By similarity). Highly concentrated in the undercoat of the cell-to-cell adherens junction and the cleavage furrow in the interphase and mitotic phase, respectively.</text>
</comment>
<comment type="domain">
    <text evidence="1">The N-terminal domain interacts with the C-terminal domain of LAYN. An interdomain interaction between its N-terminal and C-terminal domains inhibits its ability to bind LAYN. In the presence of acidic phospholipids, the interdomain interaction is inhibited and this enhances binding to LAYN (By similarity).</text>
</comment>
<comment type="PTM">
    <text evidence="1">Phosphorylated by tyrosine-protein kinases. Phosphorylation by ROCK2 suppresses the head-to-tail association of the N-terminal and C-terminal halves resulting in an opened conformation which is capable of actin and membrane-binding (By similarity).</text>
</comment>
<proteinExistence type="evidence at transcript level"/>
<keyword id="KW-0117">Actin capping</keyword>
<keyword id="KW-0009">Actin-binding</keyword>
<keyword id="KW-1003">Cell membrane</keyword>
<keyword id="KW-0966">Cell projection</keyword>
<keyword id="KW-0963">Cytoplasm</keyword>
<keyword id="KW-0206">Cytoskeleton</keyword>
<keyword id="KW-0472">Membrane</keyword>
<keyword id="KW-0597">Phosphoprotein</keyword>
<keyword id="KW-1185">Reference proteome</keyword>
<organism>
    <name type="scientific">Sus scrofa</name>
    <name type="common">Pig</name>
    <dbReference type="NCBI Taxonomy" id="9823"/>
    <lineage>
        <taxon>Eukaryota</taxon>
        <taxon>Metazoa</taxon>
        <taxon>Chordata</taxon>
        <taxon>Craniata</taxon>
        <taxon>Vertebrata</taxon>
        <taxon>Euteleostomi</taxon>
        <taxon>Mammalia</taxon>
        <taxon>Eutheria</taxon>
        <taxon>Laurasiatheria</taxon>
        <taxon>Artiodactyla</taxon>
        <taxon>Suina</taxon>
        <taxon>Suidae</taxon>
        <taxon>Sus</taxon>
    </lineage>
</organism>
<dbReference type="EMBL" id="M86444">
    <property type="protein sequence ID" value="AAB02865.1"/>
    <property type="molecule type" value="mRNA"/>
</dbReference>
<dbReference type="PIR" id="S39805">
    <property type="entry name" value="S39805"/>
</dbReference>
<dbReference type="RefSeq" id="NP_001009576.1">
    <property type="nucleotide sequence ID" value="NM_001009576.1"/>
</dbReference>
<dbReference type="SMR" id="P26044"/>
<dbReference type="FunCoup" id="P26044">
    <property type="interactions" value="878"/>
</dbReference>
<dbReference type="STRING" id="9823.ENSSSCP00000031746"/>
<dbReference type="PaxDb" id="9823-ENSSSCP00000015937"/>
<dbReference type="PeptideAtlas" id="P26044"/>
<dbReference type="GeneID" id="494457"/>
<dbReference type="KEGG" id="ssc:494457"/>
<dbReference type="CTD" id="5962"/>
<dbReference type="eggNOG" id="KOG3529">
    <property type="taxonomic scope" value="Eukaryota"/>
</dbReference>
<dbReference type="InParanoid" id="P26044"/>
<dbReference type="OrthoDB" id="6018897at2759"/>
<dbReference type="PRO" id="PR:P26044"/>
<dbReference type="Proteomes" id="UP000008227">
    <property type="component" value="Unplaced"/>
</dbReference>
<dbReference type="Proteomes" id="UP000314985">
    <property type="component" value="Unplaced"/>
</dbReference>
<dbReference type="Proteomes" id="UP000694570">
    <property type="component" value="Unplaced"/>
</dbReference>
<dbReference type="Proteomes" id="UP000694571">
    <property type="component" value="Unplaced"/>
</dbReference>
<dbReference type="Proteomes" id="UP000694720">
    <property type="component" value="Unplaced"/>
</dbReference>
<dbReference type="Proteomes" id="UP000694722">
    <property type="component" value="Unplaced"/>
</dbReference>
<dbReference type="Proteomes" id="UP000694723">
    <property type="component" value="Unplaced"/>
</dbReference>
<dbReference type="Proteomes" id="UP000694724">
    <property type="component" value="Unplaced"/>
</dbReference>
<dbReference type="Proteomes" id="UP000694725">
    <property type="component" value="Unplaced"/>
</dbReference>
<dbReference type="Proteomes" id="UP000694726">
    <property type="component" value="Unplaced"/>
</dbReference>
<dbReference type="Proteomes" id="UP000694727">
    <property type="component" value="Unplaced"/>
</dbReference>
<dbReference type="Proteomes" id="UP000694728">
    <property type="component" value="Unplaced"/>
</dbReference>
<dbReference type="GO" id="GO:0005912">
    <property type="term" value="C:adherens junction"/>
    <property type="evidence" value="ECO:0000318"/>
    <property type="project" value="GO_Central"/>
</dbReference>
<dbReference type="GO" id="GO:0045177">
    <property type="term" value="C:apical part of cell"/>
    <property type="evidence" value="ECO:0000318"/>
    <property type="project" value="GO_Central"/>
</dbReference>
<dbReference type="GO" id="GO:0032154">
    <property type="term" value="C:cleavage furrow"/>
    <property type="evidence" value="ECO:0007669"/>
    <property type="project" value="UniProtKB-SubCell"/>
</dbReference>
<dbReference type="GO" id="GO:0005737">
    <property type="term" value="C:cytoplasm"/>
    <property type="evidence" value="ECO:0007669"/>
    <property type="project" value="UniProtKB-KW"/>
</dbReference>
<dbReference type="GO" id="GO:0005856">
    <property type="term" value="C:cytoskeleton"/>
    <property type="evidence" value="ECO:0007669"/>
    <property type="project" value="UniProtKB-SubCell"/>
</dbReference>
<dbReference type="GO" id="GO:0030175">
    <property type="term" value="C:filopodium"/>
    <property type="evidence" value="ECO:0000318"/>
    <property type="project" value="GO_Central"/>
</dbReference>
<dbReference type="GO" id="GO:0005902">
    <property type="term" value="C:microvillus"/>
    <property type="evidence" value="ECO:0000250"/>
    <property type="project" value="UniProtKB"/>
</dbReference>
<dbReference type="GO" id="GO:0005886">
    <property type="term" value="C:plasma membrane"/>
    <property type="evidence" value="ECO:0000318"/>
    <property type="project" value="GO_Central"/>
</dbReference>
<dbReference type="GO" id="GO:0120044">
    <property type="term" value="C:stereocilium base"/>
    <property type="evidence" value="ECO:0000250"/>
    <property type="project" value="UniProtKB"/>
</dbReference>
<dbReference type="GO" id="GO:0003779">
    <property type="term" value="F:actin binding"/>
    <property type="evidence" value="ECO:0000318"/>
    <property type="project" value="GO_Central"/>
</dbReference>
<dbReference type="GO" id="GO:0050839">
    <property type="term" value="F:cell adhesion molecule binding"/>
    <property type="evidence" value="ECO:0000318"/>
    <property type="project" value="GO_Central"/>
</dbReference>
<dbReference type="GO" id="GO:0051693">
    <property type="term" value="P:actin filament capping"/>
    <property type="evidence" value="ECO:0007669"/>
    <property type="project" value="UniProtKB-KW"/>
</dbReference>
<dbReference type="GO" id="GO:2000643">
    <property type="term" value="P:positive regulation of early endosome to late endosome transport"/>
    <property type="evidence" value="ECO:0000318"/>
    <property type="project" value="GO_Central"/>
</dbReference>
<dbReference type="GO" id="GO:1902966">
    <property type="term" value="P:positive regulation of protein localization to early endosome"/>
    <property type="evidence" value="ECO:0000318"/>
    <property type="project" value="GO_Central"/>
</dbReference>
<dbReference type="GO" id="GO:0008360">
    <property type="term" value="P:regulation of cell shape"/>
    <property type="evidence" value="ECO:0000318"/>
    <property type="project" value="GO_Central"/>
</dbReference>
<dbReference type="GO" id="GO:1902115">
    <property type="term" value="P:regulation of organelle assembly"/>
    <property type="evidence" value="ECO:0000318"/>
    <property type="project" value="GO_Central"/>
</dbReference>
<dbReference type="CDD" id="cd14473">
    <property type="entry name" value="FERM_B-lobe"/>
    <property type="match status" value="1"/>
</dbReference>
<dbReference type="CDD" id="cd13194">
    <property type="entry name" value="FERM_C_ERM"/>
    <property type="match status" value="1"/>
</dbReference>
<dbReference type="CDD" id="cd17187">
    <property type="entry name" value="FERM_F1_ERM"/>
    <property type="match status" value="1"/>
</dbReference>
<dbReference type="FunFam" id="2.30.29.30:FF:000003">
    <property type="entry name" value="Radixin isoform 1"/>
    <property type="match status" value="1"/>
</dbReference>
<dbReference type="FunFam" id="1.20.80.10:FF:000002">
    <property type="entry name" value="radixin isoform X1"/>
    <property type="match status" value="1"/>
</dbReference>
<dbReference type="FunFam" id="3.10.20.90:FF:000013">
    <property type="entry name" value="radixin isoform X1"/>
    <property type="match status" value="1"/>
</dbReference>
<dbReference type="FunFam" id="1.20.5.450:FF:000001">
    <property type="entry name" value="radixin isoform X2"/>
    <property type="match status" value="1"/>
</dbReference>
<dbReference type="Gene3D" id="1.20.5.450">
    <property type="match status" value="1"/>
</dbReference>
<dbReference type="Gene3D" id="1.20.80.10">
    <property type="match status" value="1"/>
</dbReference>
<dbReference type="Gene3D" id="6.10.360.10">
    <property type="match status" value="1"/>
</dbReference>
<dbReference type="Gene3D" id="3.10.20.90">
    <property type="entry name" value="Phosphatidylinositol 3-kinase Catalytic Subunit, Chain A, domain 1"/>
    <property type="match status" value="1"/>
</dbReference>
<dbReference type="Gene3D" id="2.30.29.30">
    <property type="entry name" value="Pleckstrin-homology domain (PH domain)/Phosphotyrosine-binding domain (PTB)"/>
    <property type="match status" value="1"/>
</dbReference>
<dbReference type="InterPro" id="IPR019749">
    <property type="entry name" value="Band_41_domain"/>
</dbReference>
<dbReference type="InterPro" id="IPR011174">
    <property type="entry name" value="ERM"/>
</dbReference>
<dbReference type="InterPro" id="IPR011259">
    <property type="entry name" value="ERM_C_dom"/>
</dbReference>
<dbReference type="InterPro" id="IPR041789">
    <property type="entry name" value="ERM_FERM_C"/>
</dbReference>
<dbReference type="InterPro" id="IPR046810">
    <property type="entry name" value="ERM_helical"/>
</dbReference>
<dbReference type="InterPro" id="IPR000798">
    <property type="entry name" value="Ez/rad/moesin-like"/>
</dbReference>
<dbReference type="InterPro" id="IPR014352">
    <property type="entry name" value="FERM/acyl-CoA-bd_prot_sf"/>
</dbReference>
<dbReference type="InterPro" id="IPR035963">
    <property type="entry name" value="FERM_2"/>
</dbReference>
<dbReference type="InterPro" id="IPR019748">
    <property type="entry name" value="FERM_central"/>
</dbReference>
<dbReference type="InterPro" id="IPR019747">
    <property type="entry name" value="FERM_CS"/>
</dbReference>
<dbReference type="InterPro" id="IPR000299">
    <property type="entry name" value="FERM_domain"/>
</dbReference>
<dbReference type="InterPro" id="IPR018979">
    <property type="entry name" value="FERM_N"/>
</dbReference>
<dbReference type="InterPro" id="IPR018980">
    <property type="entry name" value="FERM_PH-like_C"/>
</dbReference>
<dbReference type="InterPro" id="IPR008954">
    <property type="entry name" value="Moesin_tail_sf"/>
</dbReference>
<dbReference type="InterPro" id="IPR011993">
    <property type="entry name" value="PH-like_dom_sf"/>
</dbReference>
<dbReference type="InterPro" id="IPR029071">
    <property type="entry name" value="Ubiquitin-like_domsf"/>
</dbReference>
<dbReference type="PANTHER" id="PTHR23281">
    <property type="entry name" value="MERLIN/MOESIN/EZRIN/RADIXIN"/>
    <property type="match status" value="1"/>
</dbReference>
<dbReference type="Pfam" id="PF00769">
    <property type="entry name" value="ERM_C"/>
    <property type="match status" value="1"/>
</dbReference>
<dbReference type="Pfam" id="PF20492">
    <property type="entry name" value="ERM_helical"/>
    <property type="match status" value="1"/>
</dbReference>
<dbReference type="Pfam" id="PF09380">
    <property type="entry name" value="FERM_C"/>
    <property type="match status" value="1"/>
</dbReference>
<dbReference type="Pfam" id="PF00373">
    <property type="entry name" value="FERM_M"/>
    <property type="match status" value="1"/>
</dbReference>
<dbReference type="Pfam" id="PF09379">
    <property type="entry name" value="FERM_N"/>
    <property type="match status" value="1"/>
</dbReference>
<dbReference type="PIRSF" id="PIRSF002305">
    <property type="entry name" value="ERM"/>
    <property type="match status" value="1"/>
</dbReference>
<dbReference type="PRINTS" id="PR00935">
    <property type="entry name" value="BAND41"/>
</dbReference>
<dbReference type="PRINTS" id="PR00661">
    <property type="entry name" value="ERMFAMILY"/>
</dbReference>
<dbReference type="SMART" id="SM00295">
    <property type="entry name" value="B41"/>
    <property type="match status" value="1"/>
</dbReference>
<dbReference type="SMART" id="SM01196">
    <property type="entry name" value="FERM_C"/>
    <property type="match status" value="1"/>
</dbReference>
<dbReference type="SUPFAM" id="SSF48678">
    <property type="entry name" value="Moesin tail domain"/>
    <property type="match status" value="1"/>
</dbReference>
<dbReference type="SUPFAM" id="SSF50729">
    <property type="entry name" value="PH domain-like"/>
    <property type="match status" value="1"/>
</dbReference>
<dbReference type="SUPFAM" id="SSF47031">
    <property type="entry name" value="Second domain of FERM"/>
    <property type="match status" value="1"/>
</dbReference>
<dbReference type="SUPFAM" id="SSF54236">
    <property type="entry name" value="Ubiquitin-like"/>
    <property type="match status" value="1"/>
</dbReference>
<dbReference type="PROSITE" id="PS00660">
    <property type="entry name" value="FERM_1"/>
    <property type="match status" value="1"/>
</dbReference>
<dbReference type="PROSITE" id="PS00661">
    <property type="entry name" value="FERM_2"/>
    <property type="match status" value="1"/>
</dbReference>
<dbReference type="PROSITE" id="PS50057">
    <property type="entry name" value="FERM_3"/>
    <property type="match status" value="1"/>
</dbReference>
<reference key="1">
    <citation type="journal article" date="1993" name="Biochim. Biophys. Acta">
        <title>Cloning and sequencing of porcine moesin and radixin cDNA and identification of highly conserved domains.</title>
        <authorList>
            <person name="Lankes W.T."/>
            <person name="Schwartz-Albiez R."/>
            <person name="Furthmayr H."/>
        </authorList>
    </citation>
    <scope>NUCLEOTIDE SEQUENCE [MRNA]</scope>
</reference>
<name>RADI_PIG</name>